<protein>
    <recommendedName>
        <fullName>Lipoma-preferred partner homolog</fullName>
    </recommendedName>
</protein>
<reference key="1">
    <citation type="journal article" date="2004" name="Genome Res.">
        <title>The status, quality, and expansion of the NIH full-length cDNA project: the Mammalian Gene Collection (MGC).</title>
        <authorList>
            <consortium name="The MGC Project Team"/>
        </authorList>
    </citation>
    <scope>NUCLEOTIDE SEQUENCE [LARGE SCALE MRNA]</scope>
    <source>
        <strain>Brown Norway</strain>
        <tissue>Testis</tissue>
    </source>
</reference>
<reference key="2">
    <citation type="journal article" date="2012" name="Nat. Commun.">
        <title>Quantitative maps of protein phosphorylation sites across 14 different rat organs and tissues.</title>
        <authorList>
            <person name="Lundby A."/>
            <person name="Secher A."/>
            <person name="Lage K."/>
            <person name="Nordsborg N.B."/>
            <person name="Dmytriyev A."/>
            <person name="Lundby C."/>
            <person name="Olsen J.V."/>
        </authorList>
    </citation>
    <scope>PHOSPHORYLATION [LARGE SCALE ANALYSIS] AT SER-117 AND SER-152</scope>
    <scope>IDENTIFICATION BY MASS SPECTROMETRY [LARGE SCALE ANALYSIS]</scope>
</reference>
<evidence type="ECO:0000250" key="1"/>
<evidence type="ECO:0000250" key="2">
    <source>
        <dbReference type="UniProtKB" id="Q8BFW7"/>
    </source>
</evidence>
<evidence type="ECO:0000250" key="3">
    <source>
        <dbReference type="UniProtKB" id="Q93052"/>
    </source>
</evidence>
<evidence type="ECO:0000255" key="4">
    <source>
        <dbReference type="PROSITE-ProRule" id="PRU00125"/>
    </source>
</evidence>
<evidence type="ECO:0000256" key="5">
    <source>
        <dbReference type="SAM" id="MobiDB-lite"/>
    </source>
</evidence>
<evidence type="ECO:0000305" key="6"/>
<evidence type="ECO:0007744" key="7">
    <source>
    </source>
</evidence>
<sequence>MSHPSWLPPRSTGEPLGHVPARMETTHSFGTPSISVSTQQPPKKFAPVVAPKPKYNPYKQPGGEGDFLPPPPPPLEDPGTIPSGSGHFPPPPPLDEGAFIVQRGNPGGKTLEERRSSLDAEIDSLTSILADLECSSPYKPRAPPGSSSSIASPPVSTPVTGHKRMVIPQQPPLTATKKSATKPQAIPIPVTPIGTLKPQPQPVPASYSTASTSSRPAFNVQVKSAQPSTHYMTGSSSGQMYGPGSRSYNTQQVPLSAQCPPPTTCAGTDYAYIPPSGQQAESGFGYTSNQGRYFEPFFAACPSYGGRNEADPAYGQQVQPNTWKREPGYAAPGAGNQNQPGMYSVSGPKKTYITDPVSAPCAPPVQPKERLVKNQKVLQNVVDDRVHGLRKSGFPAPMGPPSVPPSFRPEDELEHLTKKMLYDMENPPADDYFGRCARCGENVVGEGTGCTAMDQVFHVDCFTCMVCDIKLRGQPFYAVEKKAYCEPCYINTLEQCSVCSKPIMERILRATGKAYHPHCFTCVMCHRSLDGIPFTVDACGLIHCIEDFHKKFAPRCSVCKEPIMPAPGQEETVRIVALDRDFHVHCYRCEDCGGLLSEGDNQGCYPLDGHILCKSCNSARIRVLTAKASTDL</sequence>
<keyword id="KW-0007">Acetylation</keyword>
<keyword id="KW-0010">Activator</keyword>
<keyword id="KW-0130">Cell adhesion</keyword>
<keyword id="KW-0965">Cell junction</keyword>
<keyword id="KW-0963">Cytoplasm</keyword>
<keyword id="KW-1017">Isopeptide bond</keyword>
<keyword id="KW-0440">LIM domain</keyword>
<keyword id="KW-0479">Metal-binding</keyword>
<keyword id="KW-0488">Methylation</keyword>
<keyword id="KW-0539">Nucleus</keyword>
<keyword id="KW-0597">Phosphoprotein</keyword>
<keyword id="KW-1185">Reference proteome</keyword>
<keyword id="KW-0677">Repeat</keyword>
<keyword id="KW-0832">Ubl conjugation</keyword>
<keyword id="KW-0862">Zinc</keyword>
<organism>
    <name type="scientific">Rattus norvegicus</name>
    <name type="common">Rat</name>
    <dbReference type="NCBI Taxonomy" id="10116"/>
    <lineage>
        <taxon>Eukaryota</taxon>
        <taxon>Metazoa</taxon>
        <taxon>Chordata</taxon>
        <taxon>Craniata</taxon>
        <taxon>Vertebrata</taxon>
        <taxon>Euteleostomi</taxon>
        <taxon>Mammalia</taxon>
        <taxon>Eutheria</taxon>
        <taxon>Euarchontoglires</taxon>
        <taxon>Glires</taxon>
        <taxon>Rodentia</taxon>
        <taxon>Myomorpha</taxon>
        <taxon>Muroidea</taxon>
        <taxon>Muridae</taxon>
        <taxon>Murinae</taxon>
        <taxon>Rattus</taxon>
    </lineage>
</organism>
<dbReference type="EMBL" id="BC083627">
    <property type="protein sequence ID" value="AAH83627.1"/>
    <property type="molecule type" value="mRNA"/>
</dbReference>
<dbReference type="EMBL" id="BC083890">
    <property type="protein sequence ID" value="AAH83890.1"/>
    <property type="molecule type" value="mRNA"/>
</dbReference>
<dbReference type="RefSeq" id="NP_001013886.1">
    <property type="nucleotide sequence ID" value="NM_001013864.1"/>
</dbReference>
<dbReference type="RefSeq" id="XP_006248567.1">
    <property type="nucleotide sequence ID" value="XM_006248505.5"/>
</dbReference>
<dbReference type="RefSeq" id="XP_017453399.1">
    <property type="nucleotide sequence ID" value="XM_017597910.3"/>
</dbReference>
<dbReference type="RefSeq" id="XP_017453400.1">
    <property type="nucleotide sequence ID" value="XM_017597911.3"/>
</dbReference>
<dbReference type="RefSeq" id="XP_017453401.1">
    <property type="nucleotide sequence ID" value="XM_017597912.3"/>
</dbReference>
<dbReference type="RefSeq" id="XP_017453402.1">
    <property type="nucleotide sequence ID" value="XM_017597913.3"/>
</dbReference>
<dbReference type="RefSeq" id="XP_017453403.1">
    <property type="nucleotide sequence ID" value="XM_017597914.1"/>
</dbReference>
<dbReference type="RefSeq" id="XP_017453404.1">
    <property type="nucleotide sequence ID" value="XM_017597915.3"/>
</dbReference>
<dbReference type="RefSeq" id="XP_017453405.1">
    <property type="nucleotide sequence ID" value="XM_017597916.1"/>
</dbReference>
<dbReference type="RefSeq" id="XP_017453406.1">
    <property type="nucleotide sequence ID" value="XM_017597917.1"/>
</dbReference>
<dbReference type="RefSeq" id="XP_017453407.1">
    <property type="nucleotide sequence ID" value="XM_017597918.3"/>
</dbReference>
<dbReference type="RefSeq" id="XP_038944027.1">
    <property type="nucleotide sequence ID" value="XM_039088099.2"/>
</dbReference>
<dbReference type="RefSeq" id="XP_038944030.1">
    <property type="nucleotide sequence ID" value="XM_039088102.2"/>
</dbReference>
<dbReference type="SMR" id="Q5XI07"/>
<dbReference type="FunCoup" id="Q5XI07">
    <property type="interactions" value="870"/>
</dbReference>
<dbReference type="STRING" id="10116.ENSRNOP00000042917"/>
<dbReference type="GlyGen" id="Q5XI07">
    <property type="glycosylation" value="1 site, 1 O-linked glycan (1 site)"/>
</dbReference>
<dbReference type="iPTMnet" id="Q5XI07"/>
<dbReference type="PhosphoSitePlus" id="Q5XI07"/>
<dbReference type="PaxDb" id="10116-ENSRNOP00000042917"/>
<dbReference type="PeptideAtlas" id="Q5XI07"/>
<dbReference type="Ensembl" id="ENSRNOT00000113595.1">
    <property type="protein sequence ID" value="ENSRNOP00000090019.1"/>
    <property type="gene ID" value="ENSRNOG00000031669.5"/>
</dbReference>
<dbReference type="GeneID" id="288010"/>
<dbReference type="KEGG" id="rno:288010"/>
<dbReference type="UCSC" id="RGD:1310535">
    <property type="organism name" value="rat"/>
</dbReference>
<dbReference type="AGR" id="RGD:1310535"/>
<dbReference type="CTD" id="4026"/>
<dbReference type="RGD" id="1310535">
    <property type="gene designation" value="Lpp"/>
</dbReference>
<dbReference type="eggNOG" id="KOG1701">
    <property type="taxonomic scope" value="Eukaryota"/>
</dbReference>
<dbReference type="GeneTree" id="ENSGT00940000156022"/>
<dbReference type="HOGENOM" id="CLU_001357_10_0_1"/>
<dbReference type="InParanoid" id="Q5XI07"/>
<dbReference type="OMA" id="GGMDYTY"/>
<dbReference type="OrthoDB" id="25414at2759"/>
<dbReference type="PhylomeDB" id="Q5XI07"/>
<dbReference type="PRO" id="PR:Q5XI07"/>
<dbReference type="Proteomes" id="UP000002494">
    <property type="component" value="Chromosome 11"/>
</dbReference>
<dbReference type="Bgee" id="ENSRNOG00000031669">
    <property type="expression patterns" value="Expressed in testis and 18 other cell types or tissues"/>
</dbReference>
<dbReference type="GO" id="GO:0005829">
    <property type="term" value="C:cytosol"/>
    <property type="evidence" value="ECO:0007669"/>
    <property type="project" value="Ensembl"/>
</dbReference>
<dbReference type="GO" id="GO:0005925">
    <property type="term" value="C:focal adhesion"/>
    <property type="evidence" value="ECO:0000318"/>
    <property type="project" value="GO_Central"/>
</dbReference>
<dbReference type="GO" id="GO:0005634">
    <property type="term" value="C:nucleus"/>
    <property type="evidence" value="ECO:0007669"/>
    <property type="project" value="UniProtKB-SubCell"/>
</dbReference>
<dbReference type="GO" id="GO:0005886">
    <property type="term" value="C:plasma membrane"/>
    <property type="evidence" value="ECO:0007669"/>
    <property type="project" value="Ensembl"/>
</dbReference>
<dbReference type="GO" id="GO:0001725">
    <property type="term" value="C:stress fiber"/>
    <property type="evidence" value="ECO:0000318"/>
    <property type="project" value="GO_Central"/>
</dbReference>
<dbReference type="GO" id="GO:0046872">
    <property type="term" value="F:metal ion binding"/>
    <property type="evidence" value="ECO:0007669"/>
    <property type="project" value="UniProtKB-KW"/>
</dbReference>
<dbReference type="GO" id="GO:0098609">
    <property type="term" value="P:cell-cell adhesion"/>
    <property type="evidence" value="ECO:0000318"/>
    <property type="project" value="GO_Central"/>
</dbReference>
<dbReference type="CDD" id="cd09350">
    <property type="entry name" value="LIM1_TRIP6"/>
    <property type="match status" value="1"/>
</dbReference>
<dbReference type="FunFam" id="2.10.110.10:FF:000027">
    <property type="entry name" value="lipoma-preferred partner isoform X1"/>
    <property type="match status" value="1"/>
</dbReference>
<dbReference type="FunFam" id="2.10.110.10:FF:000042">
    <property type="entry name" value="lipoma-preferred partner isoform X1"/>
    <property type="match status" value="1"/>
</dbReference>
<dbReference type="FunFam" id="2.10.110.10:FF:000047">
    <property type="entry name" value="lipoma-preferred partner isoform X1"/>
    <property type="match status" value="1"/>
</dbReference>
<dbReference type="Gene3D" id="2.10.110.10">
    <property type="entry name" value="Cysteine Rich Protein"/>
    <property type="match status" value="3"/>
</dbReference>
<dbReference type="InterPro" id="IPR001781">
    <property type="entry name" value="Znf_LIM"/>
</dbReference>
<dbReference type="PANTHER" id="PTHR24207:SF0">
    <property type="entry name" value="LIPOMA-PREFERRED PARTNER"/>
    <property type="match status" value="1"/>
</dbReference>
<dbReference type="PANTHER" id="PTHR24207">
    <property type="entry name" value="ZYX102 PROTEIN"/>
    <property type="match status" value="1"/>
</dbReference>
<dbReference type="Pfam" id="PF00412">
    <property type="entry name" value="LIM"/>
    <property type="match status" value="3"/>
</dbReference>
<dbReference type="SMART" id="SM00132">
    <property type="entry name" value="LIM"/>
    <property type="match status" value="3"/>
</dbReference>
<dbReference type="SUPFAM" id="SSF57716">
    <property type="entry name" value="Glucocorticoid receptor-like (DNA-binding domain)"/>
    <property type="match status" value="3"/>
</dbReference>
<dbReference type="PROSITE" id="PS00478">
    <property type="entry name" value="LIM_DOMAIN_1"/>
    <property type="match status" value="2"/>
</dbReference>
<dbReference type="PROSITE" id="PS50023">
    <property type="entry name" value="LIM_DOMAIN_2"/>
    <property type="match status" value="3"/>
</dbReference>
<comment type="function">
    <text evidence="1">May play a structural role at sites of cell adhesion in maintaining cell shape and motility. In addition to these structural functions, it may also be implicated in signaling events and activation of gene transcription. May be involved in signal transduction from cell adhesion sites to the nucleus allowing successful integration of signals arising from soluble factors and cell-cell adhesion. Also suggested to serve as a scaffold protein upon which distinct protein complexes are assembled in the cytoplasm and in the nucleus (By similarity).</text>
</comment>
<comment type="subunit">
    <text evidence="1">Interacts with PDZ domains of SCRIB, with VASP and with ACTN1/alpha-actinin.</text>
</comment>
<comment type="subcellular location">
    <subcellularLocation>
        <location evidence="1">Nucleus</location>
    </subcellularLocation>
    <subcellularLocation>
        <location evidence="1">Cytoplasm</location>
    </subcellularLocation>
    <subcellularLocation>
        <location evidence="1">Cell junction</location>
    </subcellularLocation>
    <text evidence="1">Found in the nucleus, in the cytoplasm and at cell adhesion sites.</text>
</comment>
<comment type="similarity">
    <text evidence="6">Belongs to the zyxin/ajuba family.</text>
</comment>
<accession>Q5XI07</accession>
<proteinExistence type="evidence at protein level"/>
<gene>
    <name type="primary">Lpp</name>
</gene>
<name>LPP_RAT</name>
<feature type="chain" id="PRO_0000075834" description="Lipoma-preferred partner homolog">
    <location>
        <begin position="1"/>
        <end position="632"/>
    </location>
</feature>
<feature type="domain" description="LIM zinc-binding 1" evidence="4">
    <location>
        <begin position="434"/>
        <end position="493"/>
    </location>
</feature>
<feature type="domain" description="LIM zinc-binding 2" evidence="4">
    <location>
        <begin position="494"/>
        <end position="554"/>
    </location>
</feature>
<feature type="domain" description="LIM zinc-binding 3" evidence="4">
    <location>
        <begin position="555"/>
        <end position="623"/>
    </location>
</feature>
<feature type="region of interest" description="Disordered" evidence="5">
    <location>
        <begin position="1"/>
        <end position="118"/>
    </location>
</feature>
<feature type="region of interest" description="Disordered" evidence="5">
    <location>
        <begin position="135"/>
        <end position="249"/>
    </location>
</feature>
<feature type="compositionally biased region" description="Polar residues" evidence="5">
    <location>
        <begin position="26"/>
        <end position="40"/>
    </location>
</feature>
<feature type="compositionally biased region" description="Low complexity" evidence="5">
    <location>
        <begin position="41"/>
        <end position="53"/>
    </location>
</feature>
<feature type="compositionally biased region" description="Low complexity" evidence="5">
    <location>
        <begin position="144"/>
        <end position="160"/>
    </location>
</feature>
<feature type="compositionally biased region" description="Polar residues" evidence="5">
    <location>
        <begin position="172"/>
        <end position="182"/>
    </location>
</feature>
<feature type="compositionally biased region" description="Polar residues" evidence="5">
    <location>
        <begin position="206"/>
        <end position="239"/>
    </location>
</feature>
<feature type="modified residue" description="N6-acetyllysine" evidence="2">
    <location>
        <position position="109"/>
    </location>
</feature>
<feature type="modified residue" description="Phosphoserine" evidence="7">
    <location>
        <position position="117"/>
    </location>
</feature>
<feature type="modified residue" description="Phosphoserine" evidence="7">
    <location>
        <position position="152"/>
    </location>
</feature>
<feature type="modified residue" description="Phosphotyrosine" evidence="2">
    <location>
        <position position="241"/>
    </location>
</feature>
<feature type="modified residue" description="Omega-N-methylarginine" evidence="2">
    <location>
        <position position="246"/>
    </location>
</feature>
<feature type="cross-link" description="Glycyl lysine isopeptide (Lys-Gly) (interchain with G-Cter in SUMO1)" evidence="3">
    <location>
        <position position="324"/>
    </location>
</feature>